<proteinExistence type="evidence at protein level"/>
<accession>Q9Y898</accession>
<name>KKCCC_EMEND</name>
<gene>
    <name evidence="5" type="primary">cmkC</name>
</gene>
<keyword id="KW-0067">ATP-binding</keyword>
<keyword id="KW-0112">Calmodulin-binding</keyword>
<keyword id="KW-0131">Cell cycle</keyword>
<keyword id="KW-0132">Cell division</keyword>
<keyword id="KW-0418">Kinase</keyword>
<keyword id="KW-0547">Nucleotide-binding</keyword>
<keyword id="KW-0723">Serine/threonine-protein kinase</keyword>
<keyword id="KW-0808">Transferase</keyword>
<organism evidence="7">
    <name type="scientific">Emericella nidulans</name>
    <name type="common">Aspergillus nidulans</name>
    <dbReference type="NCBI Taxonomy" id="162425"/>
    <lineage>
        <taxon>Eukaryota</taxon>
        <taxon>Fungi</taxon>
        <taxon>Dikarya</taxon>
        <taxon>Ascomycota</taxon>
        <taxon>Pezizomycotina</taxon>
        <taxon>Eurotiomycetes</taxon>
        <taxon>Eurotiomycetidae</taxon>
        <taxon>Eurotiales</taxon>
        <taxon>Aspergillaceae</taxon>
        <taxon>Aspergillus</taxon>
        <taxon>Aspergillus subgen. Nidulantes</taxon>
    </lineage>
</organism>
<comment type="function">
    <text evidence="4">Calcium/calmodulin-dependent protein kinase that operates in the calcium-triggered CaMKK-CaMK1 signaling cascade. Phosphorylates and activates cmkB in vitro. Required in G1-phase of the cell cycle for proper timing of the initial nuclear division after germination as well as for subsequent nuclear division cycles. Required for the normal temporal regulation of nimX activity.</text>
</comment>
<comment type="catalytic activity">
    <reaction evidence="4">
        <text>L-seryl-[protein] + ATP = O-phospho-L-seryl-[protein] + ADP + H(+)</text>
        <dbReference type="Rhea" id="RHEA:17989"/>
        <dbReference type="Rhea" id="RHEA-COMP:9863"/>
        <dbReference type="Rhea" id="RHEA-COMP:11604"/>
        <dbReference type="ChEBI" id="CHEBI:15378"/>
        <dbReference type="ChEBI" id="CHEBI:29999"/>
        <dbReference type="ChEBI" id="CHEBI:30616"/>
        <dbReference type="ChEBI" id="CHEBI:83421"/>
        <dbReference type="ChEBI" id="CHEBI:456216"/>
        <dbReference type="EC" id="2.7.11.17"/>
    </reaction>
</comment>
<comment type="catalytic activity">
    <reaction evidence="4">
        <text>L-threonyl-[protein] + ATP = O-phospho-L-threonyl-[protein] + ADP + H(+)</text>
        <dbReference type="Rhea" id="RHEA:46608"/>
        <dbReference type="Rhea" id="RHEA-COMP:11060"/>
        <dbReference type="Rhea" id="RHEA-COMP:11605"/>
        <dbReference type="ChEBI" id="CHEBI:15378"/>
        <dbReference type="ChEBI" id="CHEBI:30013"/>
        <dbReference type="ChEBI" id="CHEBI:30616"/>
        <dbReference type="ChEBI" id="CHEBI:61977"/>
        <dbReference type="ChEBI" id="CHEBI:456216"/>
        <dbReference type="EC" id="2.7.11.17"/>
    </reaction>
</comment>
<comment type="activity regulation">
    <text evidence="1">Activated by Ca(2+)/calmodulin. Binding of calmodulin may relieve intrasteric autoinhibition.</text>
</comment>
<comment type="domain">
    <text evidence="1">The autoinhibitory domain overlaps with the calmodulin binding region and may be involved in intrasteric autoinhibition.</text>
</comment>
<comment type="disruption phenotype">
    <text evidence="4">Not lethal, but spores germinate with delayed kinetics and this lag corresponds to a delay in the G1-phase activation of the cyclin-dependent kinase nimX. Does not activate cmkB.</text>
</comment>
<comment type="similarity">
    <text evidence="2">Belongs to the protein kinase superfamily. Ser/Thr protein kinase family.</text>
</comment>
<dbReference type="EC" id="2.7.11.17" evidence="4"/>
<dbReference type="EMBL" id="AF156028">
    <property type="protein sequence ID" value="AAD38851.1"/>
    <property type="molecule type" value="mRNA"/>
</dbReference>
<dbReference type="SMR" id="Q9Y898"/>
<dbReference type="GO" id="GO:0005737">
    <property type="term" value="C:cytoplasm"/>
    <property type="evidence" value="ECO:0007669"/>
    <property type="project" value="TreeGrafter"/>
</dbReference>
<dbReference type="GO" id="GO:0005524">
    <property type="term" value="F:ATP binding"/>
    <property type="evidence" value="ECO:0007669"/>
    <property type="project" value="UniProtKB-KW"/>
</dbReference>
<dbReference type="GO" id="GO:0004683">
    <property type="term" value="F:calcium/calmodulin-dependent protein kinase activity"/>
    <property type="evidence" value="ECO:0007669"/>
    <property type="project" value="UniProtKB-EC"/>
</dbReference>
<dbReference type="GO" id="GO:0005516">
    <property type="term" value="F:calmodulin binding"/>
    <property type="evidence" value="ECO:0007669"/>
    <property type="project" value="UniProtKB-KW"/>
</dbReference>
<dbReference type="GO" id="GO:0106310">
    <property type="term" value="F:protein serine kinase activity"/>
    <property type="evidence" value="ECO:0007669"/>
    <property type="project" value="RHEA"/>
</dbReference>
<dbReference type="GO" id="GO:0051301">
    <property type="term" value="P:cell division"/>
    <property type="evidence" value="ECO:0007669"/>
    <property type="project" value="UniProtKB-KW"/>
</dbReference>
<dbReference type="GO" id="GO:0035556">
    <property type="term" value="P:intracellular signal transduction"/>
    <property type="evidence" value="ECO:0007669"/>
    <property type="project" value="TreeGrafter"/>
</dbReference>
<dbReference type="CDD" id="cd14008">
    <property type="entry name" value="STKc_LKB1_CaMKK"/>
    <property type="match status" value="1"/>
</dbReference>
<dbReference type="FunFam" id="3.30.200.20:FF:000447">
    <property type="entry name" value="Calcium/calmodulin dependent protein kinase"/>
    <property type="match status" value="1"/>
</dbReference>
<dbReference type="Gene3D" id="3.30.200.20">
    <property type="entry name" value="Phosphorylase Kinase, domain 1"/>
    <property type="match status" value="1"/>
</dbReference>
<dbReference type="Gene3D" id="1.10.510.10">
    <property type="entry name" value="Transferase(Phosphotransferase) domain 1"/>
    <property type="match status" value="1"/>
</dbReference>
<dbReference type="InterPro" id="IPR011009">
    <property type="entry name" value="Kinase-like_dom_sf"/>
</dbReference>
<dbReference type="InterPro" id="IPR000719">
    <property type="entry name" value="Prot_kinase_dom"/>
</dbReference>
<dbReference type="InterPro" id="IPR017441">
    <property type="entry name" value="Protein_kinase_ATP_BS"/>
</dbReference>
<dbReference type="InterPro" id="IPR008271">
    <property type="entry name" value="Ser/Thr_kinase_AS"/>
</dbReference>
<dbReference type="PANTHER" id="PTHR24346">
    <property type="entry name" value="MAP/MICROTUBULE AFFINITY-REGULATING KINASE"/>
    <property type="match status" value="1"/>
</dbReference>
<dbReference type="PANTHER" id="PTHR24346:SF77">
    <property type="entry name" value="SERINE THREONINE PROTEIN KINASE"/>
    <property type="match status" value="1"/>
</dbReference>
<dbReference type="Pfam" id="PF00069">
    <property type="entry name" value="Pkinase"/>
    <property type="match status" value="1"/>
</dbReference>
<dbReference type="SMART" id="SM00220">
    <property type="entry name" value="S_TKc"/>
    <property type="match status" value="1"/>
</dbReference>
<dbReference type="SUPFAM" id="SSF56112">
    <property type="entry name" value="Protein kinase-like (PK-like)"/>
    <property type="match status" value="1"/>
</dbReference>
<dbReference type="PROSITE" id="PS00107">
    <property type="entry name" value="PROTEIN_KINASE_ATP"/>
    <property type="match status" value="1"/>
</dbReference>
<dbReference type="PROSITE" id="PS50011">
    <property type="entry name" value="PROTEIN_KINASE_DOM"/>
    <property type="match status" value="1"/>
</dbReference>
<dbReference type="PROSITE" id="PS00108">
    <property type="entry name" value="PROTEIN_KINASE_ST"/>
    <property type="match status" value="1"/>
</dbReference>
<sequence length="518" mass="59153">MANEGAGSLQQDASPGSSARPEPYPRPSPARYASTPSFESPQRHHRRNPIARRPVKETLNARSEYTLSQDDGTADDRINQYVIKQEIGRGSFGAVHVAVDQYGNEYAVKEFSKARLRKRAKSQLLRQSRGPKRSSRWPKLPFSSPGTGTWRRRDEKCSLFYQRRNCHYEEVTPQQSSILDRGTGRPDPRFSYMVMEMCKKGVVMKVTLEERADPYDDERCRCWFRDLILGIEYLHAQGIVHRDIKPDNCLITNDDVLKVVDFGVSEMFVLNSDMFTAKSAGSPAFLPPELCVVKHGDVSGKAADIWSMGVTLYCLRYGKLPFEEHSIIELYDAIKNRPIVCDGETDEVFKDLMLRILEKDPAKRIQMDELREHPWVTKNGMDPLLPKSENTAEIVDLPTEEEMFSAITKNFGHVLAVMKAAKKFKSLQGPTRASTPIQSILGQEYETHFVEPPTQMDPEESVSLPSPLPYKKTQSLNTYNRRAWERDDVVKGYHPQRRKLSLVLRQRAANRVLRTALF</sequence>
<reference key="1">
    <citation type="journal article" date="2000" name="J. Biol. Chem.">
        <title>Identification and characterization of two Ca2+/CaM-dependent protein kinases required for normal nuclear division in Aspergillus nidulans.</title>
        <authorList>
            <person name="Joseph J.D."/>
            <person name="Means A.R."/>
        </authorList>
    </citation>
    <scope>NUCLEOTIDE SEQUENCE [MRNA]</scope>
    <scope>FUNCTION</scope>
    <scope>CATALYTIC ACTIVITY</scope>
    <scope>DISRUPTION PHENOTYPE</scope>
    <source>
        <strain>GR5</strain>
    </source>
</reference>
<feature type="chain" id="PRO_0000440634" description="Calcium/calmodulin-dependent protein kinase kinase cmkC">
    <location>
        <begin position="1"/>
        <end position="518"/>
    </location>
</feature>
<feature type="domain" description="Protein kinase" evidence="2">
    <location>
        <begin position="81"/>
        <end position="376"/>
    </location>
</feature>
<feature type="region of interest" description="Disordered" evidence="3">
    <location>
        <begin position="1"/>
        <end position="72"/>
    </location>
</feature>
<feature type="region of interest" description="Disordered" evidence="3">
    <location>
        <begin position="119"/>
        <end position="149"/>
    </location>
</feature>
<feature type="region of interest" description="Autoinhibitory domain" evidence="1 6">
    <location>
        <begin position="404"/>
        <end position="409"/>
    </location>
</feature>
<feature type="region of interest" description="Calmodulin-binding" evidence="1 6">
    <location>
        <begin position="407"/>
        <end position="431"/>
    </location>
</feature>
<feature type="region of interest" description="Disordered" evidence="3">
    <location>
        <begin position="453"/>
        <end position="472"/>
    </location>
</feature>
<feature type="compositionally biased region" description="Polar residues" evidence="3">
    <location>
        <begin position="8"/>
        <end position="17"/>
    </location>
</feature>
<feature type="compositionally biased region" description="Polar residues" evidence="3">
    <location>
        <begin position="60"/>
        <end position="71"/>
    </location>
</feature>
<feature type="active site" description="Proton acceptor" evidence="2">
    <location>
        <position position="243"/>
    </location>
</feature>
<feature type="binding site" evidence="2">
    <location>
        <begin position="87"/>
        <end position="95"/>
    </location>
    <ligand>
        <name>ATP</name>
        <dbReference type="ChEBI" id="CHEBI:30616"/>
    </ligand>
</feature>
<feature type="binding site" evidence="2">
    <location>
        <position position="109"/>
    </location>
    <ligand>
        <name>ATP</name>
        <dbReference type="ChEBI" id="CHEBI:30616"/>
    </ligand>
</feature>
<evidence type="ECO:0000250" key="1">
    <source>
        <dbReference type="UniProtKB" id="P97756"/>
    </source>
</evidence>
<evidence type="ECO:0000255" key="2">
    <source>
        <dbReference type="PROSITE-ProRule" id="PRU00159"/>
    </source>
</evidence>
<evidence type="ECO:0000256" key="3">
    <source>
        <dbReference type="SAM" id="MobiDB-lite"/>
    </source>
</evidence>
<evidence type="ECO:0000269" key="4">
    <source>
    </source>
</evidence>
<evidence type="ECO:0000303" key="5">
    <source>
    </source>
</evidence>
<evidence type="ECO:0000305" key="6"/>
<evidence type="ECO:0000312" key="7">
    <source>
        <dbReference type="EMBL" id="AAD38851.1"/>
    </source>
</evidence>
<protein>
    <recommendedName>
        <fullName evidence="6">Calcium/calmodulin-dependent protein kinase kinase cmkC</fullName>
        <ecNumber evidence="4">2.7.11.17</ecNumber>
    </recommendedName>
    <alternativeName>
        <fullName evidence="5">CaMK kinase C</fullName>
        <shortName evidence="5">CaMKK C</shortName>
    </alternativeName>
    <alternativeName>
        <fullName evidence="5">CaMKK alpha/beta homolog</fullName>
    </alternativeName>
</protein>